<organism>
    <name type="scientific">Homo sapiens</name>
    <name type="common">Human</name>
    <dbReference type="NCBI Taxonomy" id="9606"/>
    <lineage>
        <taxon>Eukaryota</taxon>
        <taxon>Metazoa</taxon>
        <taxon>Chordata</taxon>
        <taxon>Craniata</taxon>
        <taxon>Vertebrata</taxon>
        <taxon>Euteleostomi</taxon>
        <taxon>Mammalia</taxon>
        <taxon>Eutheria</taxon>
        <taxon>Euarchontoglires</taxon>
        <taxon>Primates</taxon>
        <taxon>Haplorrhini</taxon>
        <taxon>Catarrhini</taxon>
        <taxon>Hominidae</taxon>
        <taxon>Homo</taxon>
    </lineage>
</organism>
<proteinExistence type="evidence at protein level"/>
<comment type="function">
    <text evidence="1 3 4">May have roles in neural function. Ectopic expression augments motility of gliomas. Also promotes axonal regeneration (By similarity). May also have functions in cellular differentiation (By similarity). Induces differentiation of fibroblast into myofibroblast and myofibroblast ameboid migration. Increases retinoic-acid regulation of lipid-droplet biogenesis (By similarity). Down-regulates the expression of TGFB1 and TGFB2 but not of TGFB3 (By similarity). May play a role in the regulation of alveolar generation.</text>
</comment>
<comment type="subunit">
    <text evidence="1 4">Interacts with the latency-associated peptides (LAP) of TGFB1 and TGFB2; the interaction results in a decrease in TGFB autoinduction (By similarity). Interacts with FLNA.</text>
</comment>
<comment type="interaction">
    <interactant intactId="EBI-718657">
        <id>Q16612</id>
    </interactant>
    <interactant intactId="EBI-372243">
        <id>P56537</id>
        <label>EIF6</label>
    </interactant>
    <organismsDiffer>false</organismsDiffer>
    <experiments>5</experiments>
</comment>
<comment type="subcellular location">
    <subcellularLocation>
        <location evidence="3">Cytoplasm</location>
    </subcellularLocation>
</comment>
<comment type="alternative products">
    <event type="alternative splicing"/>
    <isoform>
        <id>Q16612-1</id>
        <name>1</name>
        <sequence type="displayed"/>
    </isoform>
    <isoform>
        <id>Q16612-2</id>
        <name>2</name>
        <sequence type="described" ref="VSP_043013"/>
    </isoform>
</comment>
<comment type="tissue specificity">
    <text evidence="5">Expressed in lung (at protein level).</text>
</comment>
<comment type="developmental stage">
    <text evidence="5">In embryos of gestational week (gw) 24, detected mostly in the epithelial cells of saccular surfaces. In gw 39, detected in the cells lining the alveolar surfaces as well as in the mesenchyme (at protein level).</text>
</comment>
<comment type="induction">
    <text evidence="5">Down-regulated in emphysematous lung compared to normal lung.</text>
</comment>
<comment type="PTM">
    <text evidence="4">Phosphorylated on Ser-59. Phosphorylation decreases stability and activity.</text>
</comment>
<feature type="chain" id="PRO_0000057937" description="Neuronal regeneration-related protein">
    <location>
        <begin position="1"/>
        <end position="68"/>
    </location>
</feature>
<feature type="region of interest" description="Disordered" evidence="2">
    <location>
        <begin position="22"/>
        <end position="54"/>
    </location>
</feature>
<feature type="compositionally biased region" description="Polar residues" evidence="2">
    <location>
        <begin position="44"/>
        <end position="54"/>
    </location>
</feature>
<feature type="modified residue" description="Phosphoserine" evidence="7">
    <location>
        <position position="59"/>
    </location>
</feature>
<feature type="splice variant" id="VSP_043013" description="In isoform 2." evidence="6">
    <original>M</original>
    <variation>MKGVWNYSALSRREDETRTQRSRMTDRVPCSKCFQVHCQISVLNC</variation>
    <location>
        <position position="1"/>
    </location>
</feature>
<feature type="sequence variant" id="VAR_051238" description="In dbSNP:rs11559.">
    <original>E</original>
    <variation>G</variation>
    <location>
        <position position="43"/>
    </location>
</feature>
<feature type="mutagenesis site" description="Reduces protein degradation and induces glioma cell migration." evidence="4">
    <original>S</original>
    <variation>A</variation>
    <location>
        <position position="59"/>
    </location>
</feature>
<feature type="mutagenesis site" description="Accelerates protein degradation and reduces glioma cell migration." evidence="4">
    <original>S</original>
    <variation>D</variation>
    <location>
        <position position="59"/>
    </location>
</feature>
<gene>
    <name type="primary">NREP</name>
    <name type="synonym">C5orf13</name>
    <name type="synonym">P311</name>
</gene>
<name>NREP_HUMAN</name>
<accession>Q16612</accession>
<accession>B2RDN8</accession>
<accession>B7Z5D2</accession>
<accession>D3DSZ8</accession>
<keyword id="KW-0025">Alternative splicing</keyword>
<keyword id="KW-0963">Cytoplasm</keyword>
<keyword id="KW-0597">Phosphoprotein</keyword>
<keyword id="KW-1267">Proteomics identification</keyword>
<keyword id="KW-1185">Reference proteome</keyword>
<sequence length="68" mass="7909">MVYYPELFVWVSQEPFPNKDMEGRLPKGRLPVPKEVNRKKNDETNAASLTPLGSSELRSPRISYLHFF</sequence>
<reference key="1">
    <citation type="submission" date="1996-04" db="EMBL/GenBank/DDBJ databases">
        <title>Identification of a human heart cDNA sequence homologue of mouse P311 protein.</title>
        <authorList>
            <person name="Tsui S.K.W."/>
            <person name="Fung K.P."/>
            <person name="Waye M.M.Y."/>
            <person name="Lee C.Y."/>
        </authorList>
    </citation>
    <scope>NUCLEOTIDE SEQUENCE [MRNA] (ISOFORM 1)</scope>
    <source>
        <tissue>Heart</tissue>
    </source>
</reference>
<reference key="2">
    <citation type="submission" date="1995-06" db="EMBL/GenBank/DDBJ databases">
        <authorList>
            <person name="Studler J.-M."/>
        </authorList>
    </citation>
    <scope>NUCLEOTIDE SEQUENCE [MRNA] (ISOFORM 1)</scope>
    <source>
        <tissue>Cerebellum</tissue>
    </source>
</reference>
<reference key="3">
    <citation type="journal article" date="2004" name="Nat. Genet.">
        <title>Complete sequencing and characterization of 21,243 full-length human cDNAs.</title>
        <authorList>
            <person name="Ota T."/>
            <person name="Suzuki Y."/>
            <person name="Nishikawa T."/>
            <person name="Otsuki T."/>
            <person name="Sugiyama T."/>
            <person name="Irie R."/>
            <person name="Wakamatsu A."/>
            <person name="Hayashi K."/>
            <person name="Sato H."/>
            <person name="Nagai K."/>
            <person name="Kimura K."/>
            <person name="Makita H."/>
            <person name="Sekine M."/>
            <person name="Obayashi M."/>
            <person name="Nishi T."/>
            <person name="Shibahara T."/>
            <person name="Tanaka T."/>
            <person name="Ishii S."/>
            <person name="Yamamoto J."/>
            <person name="Saito K."/>
            <person name="Kawai Y."/>
            <person name="Isono Y."/>
            <person name="Nakamura Y."/>
            <person name="Nagahari K."/>
            <person name="Murakami K."/>
            <person name="Yasuda T."/>
            <person name="Iwayanagi T."/>
            <person name="Wagatsuma M."/>
            <person name="Shiratori A."/>
            <person name="Sudo H."/>
            <person name="Hosoiri T."/>
            <person name="Kaku Y."/>
            <person name="Kodaira H."/>
            <person name="Kondo H."/>
            <person name="Sugawara M."/>
            <person name="Takahashi M."/>
            <person name="Kanda K."/>
            <person name="Yokoi T."/>
            <person name="Furuya T."/>
            <person name="Kikkawa E."/>
            <person name="Omura Y."/>
            <person name="Abe K."/>
            <person name="Kamihara K."/>
            <person name="Katsuta N."/>
            <person name="Sato K."/>
            <person name="Tanikawa M."/>
            <person name="Yamazaki M."/>
            <person name="Ninomiya K."/>
            <person name="Ishibashi T."/>
            <person name="Yamashita H."/>
            <person name="Murakawa K."/>
            <person name="Fujimori K."/>
            <person name="Tanai H."/>
            <person name="Kimata M."/>
            <person name="Watanabe M."/>
            <person name="Hiraoka S."/>
            <person name="Chiba Y."/>
            <person name="Ishida S."/>
            <person name="Ono Y."/>
            <person name="Takiguchi S."/>
            <person name="Watanabe S."/>
            <person name="Yosida M."/>
            <person name="Hotuta T."/>
            <person name="Kusano J."/>
            <person name="Kanehori K."/>
            <person name="Takahashi-Fujii A."/>
            <person name="Hara H."/>
            <person name="Tanase T.-O."/>
            <person name="Nomura Y."/>
            <person name="Togiya S."/>
            <person name="Komai F."/>
            <person name="Hara R."/>
            <person name="Takeuchi K."/>
            <person name="Arita M."/>
            <person name="Imose N."/>
            <person name="Musashino K."/>
            <person name="Yuuki H."/>
            <person name="Oshima A."/>
            <person name="Sasaki N."/>
            <person name="Aotsuka S."/>
            <person name="Yoshikawa Y."/>
            <person name="Matsunawa H."/>
            <person name="Ichihara T."/>
            <person name="Shiohata N."/>
            <person name="Sano S."/>
            <person name="Moriya S."/>
            <person name="Momiyama H."/>
            <person name="Satoh N."/>
            <person name="Takami S."/>
            <person name="Terashima Y."/>
            <person name="Suzuki O."/>
            <person name="Nakagawa S."/>
            <person name="Senoh A."/>
            <person name="Mizoguchi H."/>
            <person name="Goto Y."/>
            <person name="Shimizu F."/>
            <person name="Wakebe H."/>
            <person name="Hishigaki H."/>
            <person name="Watanabe T."/>
            <person name="Sugiyama A."/>
            <person name="Takemoto M."/>
            <person name="Kawakami B."/>
            <person name="Yamazaki M."/>
            <person name="Watanabe K."/>
            <person name="Kumagai A."/>
            <person name="Itakura S."/>
            <person name="Fukuzumi Y."/>
            <person name="Fujimori Y."/>
            <person name="Komiyama M."/>
            <person name="Tashiro H."/>
            <person name="Tanigami A."/>
            <person name="Fujiwara T."/>
            <person name="Ono T."/>
            <person name="Yamada K."/>
            <person name="Fujii Y."/>
            <person name="Ozaki K."/>
            <person name="Hirao M."/>
            <person name="Ohmori Y."/>
            <person name="Kawabata A."/>
            <person name="Hikiji T."/>
            <person name="Kobatake N."/>
            <person name="Inagaki H."/>
            <person name="Ikema Y."/>
            <person name="Okamoto S."/>
            <person name="Okitani R."/>
            <person name="Kawakami T."/>
            <person name="Noguchi S."/>
            <person name="Itoh T."/>
            <person name="Shigeta K."/>
            <person name="Senba T."/>
            <person name="Matsumura K."/>
            <person name="Nakajima Y."/>
            <person name="Mizuno T."/>
            <person name="Morinaga M."/>
            <person name="Sasaki M."/>
            <person name="Togashi T."/>
            <person name="Oyama M."/>
            <person name="Hata H."/>
            <person name="Watanabe M."/>
            <person name="Komatsu T."/>
            <person name="Mizushima-Sugano J."/>
            <person name="Satoh T."/>
            <person name="Shirai Y."/>
            <person name="Takahashi Y."/>
            <person name="Nakagawa K."/>
            <person name="Okumura K."/>
            <person name="Nagase T."/>
            <person name="Nomura N."/>
            <person name="Kikuchi H."/>
            <person name="Masuho Y."/>
            <person name="Yamashita R."/>
            <person name="Nakai K."/>
            <person name="Yada T."/>
            <person name="Nakamura Y."/>
            <person name="Ohara O."/>
            <person name="Isogai T."/>
            <person name="Sugano S."/>
        </authorList>
    </citation>
    <scope>NUCLEOTIDE SEQUENCE [LARGE SCALE MRNA] (ISOFORMS 1 AND 2)</scope>
</reference>
<reference key="4">
    <citation type="submission" date="2005-09" db="EMBL/GenBank/DDBJ databases">
        <authorList>
            <person name="Mural R.J."/>
            <person name="Istrail S."/>
            <person name="Sutton G.G."/>
            <person name="Florea L."/>
            <person name="Halpern A.L."/>
            <person name="Mobarry C.M."/>
            <person name="Lippert R."/>
            <person name="Walenz B."/>
            <person name="Shatkay H."/>
            <person name="Dew I."/>
            <person name="Miller J.R."/>
            <person name="Flanigan M.J."/>
            <person name="Edwards N.J."/>
            <person name="Bolanos R."/>
            <person name="Fasulo D."/>
            <person name="Halldorsson B.V."/>
            <person name="Hannenhalli S."/>
            <person name="Turner R."/>
            <person name="Yooseph S."/>
            <person name="Lu F."/>
            <person name="Nusskern D.R."/>
            <person name="Shue B.C."/>
            <person name="Zheng X.H."/>
            <person name="Zhong F."/>
            <person name="Delcher A.L."/>
            <person name="Huson D.H."/>
            <person name="Kravitz S.A."/>
            <person name="Mouchard L."/>
            <person name="Reinert K."/>
            <person name="Remington K.A."/>
            <person name="Clark A.G."/>
            <person name="Waterman M.S."/>
            <person name="Eichler E.E."/>
            <person name="Adams M.D."/>
            <person name="Hunkapiller M.W."/>
            <person name="Myers E.W."/>
            <person name="Venter J.C."/>
        </authorList>
    </citation>
    <scope>NUCLEOTIDE SEQUENCE [LARGE SCALE GENOMIC DNA]</scope>
</reference>
<reference key="5">
    <citation type="journal article" date="2004" name="Genome Res.">
        <title>The status, quality, and expansion of the NIH full-length cDNA project: the Mammalian Gene Collection (MGC).</title>
        <authorList>
            <consortium name="The MGC Project Team"/>
        </authorList>
    </citation>
    <scope>NUCLEOTIDE SEQUENCE [LARGE SCALE MRNA] (ISOFORM 1)</scope>
    <source>
        <tissue>Brain</tissue>
        <tissue>Lymph</tissue>
        <tissue>Skin</tissue>
    </source>
</reference>
<reference key="6">
    <citation type="journal article" date="2001" name="Cancer Res.">
        <title>Identification and validation of P311 as a glioblastoma invasion gene using laser capture microdissection.</title>
        <authorList>
            <person name="Mariani L."/>
            <person name="McDonough W.S."/>
            <person name="Hoelzinger D.B."/>
            <person name="Beaudry C."/>
            <person name="Kaczmarek E."/>
            <person name="Coons S.W."/>
            <person name="Giese A."/>
            <person name="Moghaddam M."/>
            <person name="Seiler R.W."/>
            <person name="Berens M.E."/>
        </authorList>
    </citation>
    <scope>FUNCTION</scope>
    <scope>SUBCELLULAR LOCATION</scope>
</reference>
<reference key="7">
    <citation type="journal article" date="2005" name="Neoplasia">
        <title>Regulation of glioma cell migration by serine-phosphorylated P311.</title>
        <authorList>
            <person name="McDonough W.S."/>
            <person name="Tran N.L."/>
            <person name="Berens M.E."/>
        </authorList>
    </citation>
    <scope>FUNCTION</scope>
    <scope>INTERACTION WITH FLNA</scope>
    <scope>PHOSPHORYLATION AT SER-59</scope>
    <scope>MUTAGENESIS OF SER-59</scope>
</reference>
<reference key="8">
    <citation type="journal article" date="2006" name="Am. J. Respir. Cell Mol. Biol.">
        <title>Identification of P311 as a potential gene regulating alveolar generation.</title>
        <authorList>
            <person name="Zhao L."/>
            <person name="Leung J.K."/>
            <person name="Yamamoto H."/>
            <person name="Goswami S."/>
            <person name="Kheradmand F."/>
            <person name="Vu T.H."/>
        </authorList>
    </citation>
    <scope>POSSIBLE FUNCTION</scope>
    <scope>TISSUE SPECIFICITY</scope>
    <scope>DEVELOPMENTAL STAGE</scope>
    <scope>INDUCTION</scope>
</reference>
<evidence type="ECO:0000250" key="1"/>
<evidence type="ECO:0000256" key="2">
    <source>
        <dbReference type="SAM" id="MobiDB-lite"/>
    </source>
</evidence>
<evidence type="ECO:0000269" key="3">
    <source>
    </source>
</evidence>
<evidence type="ECO:0000269" key="4">
    <source>
    </source>
</evidence>
<evidence type="ECO:0000269" key="5">
    <source>
    </source>
</evidence>
<evidence type="ECO:0000303" key="6">
    <source>
    </source>
</evidence>
<evidence type="ECO:0000305" key="7">
    <source>
    </source>
</evidence>
<dbReference type="EMBL" id="U36189">
    <property type="protein sequence ID" value="AAA93255.1"/>
    <property type="molecule type" value="mRNA"/>
</dbReference>
<dbReference type="EMBL" id="U30521">
    <property type="protein sequence ID" value="AAA74903.1"/>
    <property type="molecule type" value="mRNA"/>
</dbReference>
<dbReference type="EMBL" id="AK298779">
    <property type="protein sequence ID" value="BAH12868.1"/>
    <property type="molecule type" value="mRNA"/>
</dbReference>
<dbReference type="EMBL" id="AK315617">
    <property type="protein sequence ID" value="BAG37985.1"/>
    <property type="molecule type" value="mRNA"/>
</dbReference>
<dbReference type="EMBL" id="CH471086">
    <property type="protein sequence ID" value="EAW49019.1"/>
    <property type="molecule type" value="Genomic_DNA"/>
</dbReference>
<dbReference type="EMBL" id="CH471086">
    <property type="protein sequence ID" value="EAW49020.1"/>
    <property type="molecule type" value="Genomic_DNA"/>
</dbReference>
<dbReference type="EMBL" id="CH471086">
    <property type="protein sequence ID" value="EAW49021.1"/>
    <property type="molecule type" value="Genomic_DNA"/>
</dbReference>
<dbReference type="EMBL" id="CH471086">
    <property type="protein sequence ID" value="EAW49023.1"/>
    <property type="molecule type" value="Genomic_DNA"/>
</dbReference>
<dbReference type="EMBL" id="CH471086">
    <property type="protein sequence ID" value="EAW49025.1"/>
    <property type="molecule type" value="Genomic_DNA"/>
</dbReference>
<dbReference type="EMBL" id="BC011050">
    <property type="protein sequence ID" value="AAH11050.1"/>
    <property type="molecule type" value="mRNA"/>
</dbReference>
<dbReference type="EMBL" id="BC019068">
    <property type="protein sequence ID" value="AAH19068.1"/>
    <property type="molecule type" value="mRNA"/>
</dbReference>
<dbReference type="EMBL" id="BC072013">
    <property type="protein sequence ID" value="AAH72013.1"/>
    <property type="molecule type" value="mRNA"/>
</dbReference>
<dbReference type="EMBL" id="BC072443">
    <property type="protein sequence ID" value="AAH72443.1"/>
    <property type="molecule type" value="mRNA"/>
</dbReference>
<dbReference type="CCDS" id="CCDS4105.1">
    <molecule id="Q16612-1"/>
</dbReference>
<dbReference type="CCDS" id="CCDS47255.1">
    <molecule id="Q16612-2"/>
</dbReference>
<dbReference type="PIR" id="G02089">
    <property type="entry name" value="G02089"/>
</dbReference>
<dbReference type="RefSeq" id="NP_001135947.1">
    <molecule id="Q16612-2"/>
    <property type="nucleotide sequence ID" value="NM_001142475.2"/>
</dbReference>
<dbReference type="RefSeq" id="NP_001135948.1">
    <molecule id="Q16612-1"/>
    <property type="nucleotide sequence ID" value="NM_001142476.1"/>
</dbReference>
<dbReference type="RefSeq" id="NP_001135949.1">
    <molecule id="Q16612-1"/>
    <property type="nucleotide sequence ID" value="NM_001142477.1"/>
</dbReference>
<dbReference type="RefSeq" id="NP_001135950.1">
    <molecule id="Q16612-1"/>
    <property type="nucleotide sequence ID" value="NM_001142478.2"/>
</dbReference>
<dbReference type="RefSeq" id="NP_001135951.1">
    <molecule id="Q16612-1"/>
    <property type="nucleotide sequence ID" value="NM_001142479.1"/>
</dbReference>
<dbReference type="RefSeq" id="NP_001135952.1">
    <molecule id="Q16612-1"/>
    <property type="nucleotide sequence ID" value="NM_001142480.1"/>
</dbReference>
<dbReference type="RefSeq" id="NP_001135953.1">
    <molecule id="Q16612-1"/>
    <property type="nucleotide sequence ID" value="NM_001142481.1"/>
</dbReference>
<dbReference type="RefSeq" id="NP_001135954.1">
    <molecule id="Q16612-1"/>
    <property type="nucleotide sequence ID" value="NM_001142482.1"/>
</dbReference>
<dbReference type="RefSeq" id="NP_001135955.1">
    <molecule id="Q16612-1"/>
    <property type="nucleotide sequence ID" value="NM_001142483.1"/>
</dbReference>
<dbReference type="RefSeq" id="NP_004763.1">
    <molecule id="Q16612-1"/>
    <property type="nucleotide sequence ID" value="NM_004772.4"/>
</dbReference>
<dbReference type="BioGRID" id="114727">
    <property type="interactions" value="17"/>
</dbReference>
<dbReference type="FunCoup" id="Q16612">
    <property type="interactions" value="923"/>
</dbReference>
<dbReference type="IntAct" id="Q16612">
    <property type="interactions" value="5"/>
</dbReference>
<dbReference type="MINT" id="Q16612"/>
<dbReference type="STRING" id="9606.ENSP00000378996"/>
<dbReference type="iPTMnet" id="Q16612"/>
<dbReference type="PhosphoSitePlus" id="Q16612"/>
<dbReference type="BioMuta" id="NREP"/>
<dbReference type="DMDM" id="2833275"/>
<dbReference type="MassIVE" id="Q16612"/>
<dbReference type="PaxDb" id="9606-ENSP00000378996"/>
<dbReference type="PeptideAtlas" id="Q16612"/>
<dbReference type="Antibodypedia" id="632">
    <property type="antibodies" value="114 antibodies from 24 providers"/>
</dbReference>
<dbReference type="DNASU" id="9315"/>
<dbReference type="Ensembl" id="ENST00000257435.12">
    <molecule id="Q16612-1"/>
    <property type="protein sequence ID" value="ENSP00000257435.7"/>
    <property type="gene ID" value="ENSG00000134986.14"/>
</dbReference>
<dbReference type="Ensembl" id="ENST00000379671.7">
    <molecule id="Q16612-1"/>
    <property type="protein sequence ID" value="ENSP00000368993.3"/>
    <property type="gene ID" value="ENSG00000134986.14"/>
</dbReference>
<dbReference type="Ensembl" id="ENST00000395634.7">
    <molecule id="Q16612-2"/>
    <property type="protein sequence ID" value="ENSP00000378996.3"/>
    <property type="gene ID" value="ENSG00000134986.14"/>
</dbReference>
<dbReference type="Ensembl" id="ENST00000419114.6">
    <molecule id="Q16612-1"/>
    <property type="protein sequence ID" value="ENSP00000399766.2"/>
    <property type="gene ID" value="ENSG00000134986.14"/>
</dbReference>
<dbReference type="Ensembl" id="ENST00000446294.6">
    <molecule id="Q16612-1"/>
    <property type="protein sequence ID" value="ENSP00000402965.2"/>
    <property type="gene ID" value="ENSG00000134986.14"/>
</dbReference>
<dbReference type="Ensembl" id="ENST00000447165.6">
    <molecule id="Q16612-1"/>
    <property type="protein sequence ID" value="ENSP00000408839.2"/>
    <property type="gene ID" value="ENSG00000134986.14"/>
</dbReference>
<dbReference type="Ensembl" id="ENST00000450761.6">
    <molecule id="Q16612-1"/>
    <property type="protein sequence ID" value="ENSP00000416617.2"/>
    <property type="gene ID" value="ENSG00000134986.14"/>
</dbReference>
<dbReference type="Ensembl" id="ENST00000453526.6">
    <molecule id="Q16612-1"/>
    <property type="protein sequence ID" value="ENSP00000403383.2"/>
    <property type="gene ID" value="ENSG00000134986.14"/>
</dbReference>
<dbReference type="Ensembl" id="ENST00000455559.6">
    <molecule id="Q16612-1"/>
    <property type="protein sequence ID" value="ENSP00000392559.2"/>
    <property type="gene ID" value="ENSG00000134986.14"/>
</dbReference>
<dbReference type="Ensembl" id="ENST00000508870.5">
    <molecule id="Q16612-1"/>
    <property type="protein sequence ID" value="ENSP00000427149.1"/>
    <property type="gene ID" value="ENSG00000134986.14"/>
</dbReference>
<dbReference type="Ensembl" id="ENST00000509427.5">
    <molecule id="Q16612-1"/>
    <property type="protein sequence ID" value="ENSP00000422630.1"/>
    <property type="gene ID" value="ENSG00000134986.14"/>
</dbReference>
<dbReference type="GeneID" id="9315"/>
<dbReference type="KEGG" id="hsa:9315"/>
<dbReference type="MANE-Select" id="ENST00000257435.12">
    <property type="protein sequence ID" value="ENSP00000257435.7"/>
    <property type="RefSeq nucleotide sequence ID" value="NM_004772.4"/>
    <property type="RefSeq protein sequence ID" value="NP_004763.1"/>
</dbReference>
<dbReference type="UCSC" id="uc003kpl.3">
    <molecule id="Q16612-1"/>
    <property type="organism name" value="human"/>
</dbReference>
<dbReference type="AGR" id="HGNC:16834"/>
<dbReference type="CTD" id="9315"/>
<dbReference type="DisGeNET" id="9315"/>
<dbReference type="GeneCards" id="NREP"/>
<dbReference type="HGNC" id="HGNC:16834">
    <property type="gene designation" value="NREP"/>
</dbReference>
<dbReference type="HPA" id="ENSG00000134986">
    <property type="expression patterns" value="Tissue enhanced (brain)"/>
</dbReference>
<dbReference type="MIM" id="607332">
    <property type="type" value="gene"/>
</dbReference>
<dbReference type="neXtProt" id="NX_Q16612"/>
<dbReference type="OpenTargets" id="ENSG00000134986"/>
<dbReference type="PharmGKB" id="PA128394547"/>
<dbReference type="VEuPathDB" id="HostDB:ENSG00000134986"/>
<dbReference type="eggNOG" id="ENOG502SFKT">
    <property type="taxonomic scope" value="Eukaryota"/>
</dbReference>
<dbReference type="GeneTree" id="ENSGT00390000016521"/>
<dbReference type="HOGENOM" id="CLU_2144998_0_0_1"/>
<dbReference type="InParanoid" id="Q16612"/>
<dbReference type="OMA" id="PRSTIWV"/>
<dbReference type="OrthoDB" id="9383199at2759"/>
<dbReference type="PAN-GO" id="Q16612">
    <property type="GO annotations" value="5 GO annotations based on evolutionary models"/>
</dbReference>
<dbReference type="PhylomeDB" id="Q16612"/>
<dbReference type="TreeFam" id="TF336368"/>
<dbReference type="PathwayCommons" id="Q16612"/>
<dbReference type="SignaLink" id="Q16612"/>
<dbReference type="SIGNOR" id="Q16612"/>
<dbReference type="BioGRID-ORCS" id="9315">
    <property type="hits" value="16 hits in 1109 CRISPR screens"/>
</dbReference>
<dbReference type="ChiTaRS" id="NREP">
    <property type="organism name" value="human"/>
</dbReference>
<dbReference type="GeneWiki" id="C5orf13"/>
<dbReference type="GenomeRNAi" id="9315"/>
<dbReference type="Pharos" id="Q16612">
    <property type="development level" value="Tbio"/>
</dbReference>
<dbReference type="PRO" id="PR:Q16612"/>
<dbReference type="Proteomes" id="UP000005640">
    <property type="component" value="Chromosome 5"/>
</dbReference>
<dbReference type="RNAct" id="Q16612">
    <property type="molecule type" value="protein"/>
</dbReference>
<dbReference type="Bgee" id="ENSG00000134986">
    <property type="expression patterns" value="Expressed in cortical plate and 209 other cell types or tissues"/>
</dbReference>
<dbReference type="ExpressionAtlas" id="Q16612">
    <property type="expression patterns" value="baseline and differential"/>
</dbReference>
<dbReference type="GO" id="GO:0005737">
    <property type="term" value="C:cytoplasm"/>
    <property type="evidence" value="ECO:0007669"/>
    <property type="project" value="UniProtKB-SubCell"/>
</dbReference>
<dbReference type="GO" id="GO:0031103">
    <property type="term" value="P:axon regeneration"/>
    <property type="evidence" value="ECO:0000318"/>
    <property type="project" value="GO_Central"/>
</dbReference>
<dbReference type="GO" id="GO:0045664">
    <property type="term" value="P:regulation of neuron differentiation"/>
    <property type="evidence" value="ECO:0000318"/>
    <property type="project" value="GO_Central"/>
</dbReference>
<dbReference type="GO" id="GO:0017015">
    <property type="term" value="P:regulation of transforming growth factor beta receptor signaling pathway"/>
    <property type="evidence" value="ECO:0000318"/>
    <property type="project" value="GO_Central"/>
</dbReference>
<dbReference type="InterPro" id="IPR024417">
    <property type="entry name" value="Neuronal_3.1"/>
</dbReference>
<dbReference type="PANTHER" id="PTHR17102">
    <property type="entry name" value="NEURONAL REGENERATION-RELATED PROTEIN"/>
    <property type="match status" value="1"/>
</dbReference>
<dbReference type="PANTHER" id="PTHR17102:SF4">
    <property type="entry name" value="NEURONAL REGENERATION-RELATED PROTEIN"/>
    <property type="match status" value="1"/>
</dbReference>
<dbReference type="Pfam" id="PF11092">
    <property type="entry name" value="Alveol-reg_P311"/>
    <property type="match status" value="1"/>
</dbReference>
<protein>
    <recommendedName>
        <fullName>Neuronal regeneration-related protein</fullName>
    </recommendedName>
    <alternativeName>
        <fullName>Neuronal protein 3.1</fullName>
    </alternativeName>
    <alternativeName>
        <fullName>Protein p311</fullName>
    </alternativeName>
</protein>